<name>SYA_PROM9</name>
<sequence>MTSQLIKKIVTGDEIRNAFLKFYSEKLHKIIPSASLIPDDPTVMLTIAGMLPFKPVFLGLKERPSKRATSSQKCIRTNDIENVGVTARHHTFFEMLGNFSFGDYFKREAIQWAWELVTNIYQLSVENIIVSVFHEDEESAKIWRDEIGIHPDRIVKLGEEDNFWSSGKTGPCGPCSELYYDFHPEKGLQNIDLEDGDRFIEFYNLVFMQYNRDSNGKLTDLKFKNIDTGMGLERMAQILQEKQNNYETDLIFPIIQKICEIANIDYFSSDDKNKISLKIIGDHTRAVIHLISDGVAASNLGRGYILRRLIRRMVRHGRLLGITNEFLPHIATVGINLMQNNYPDLKNNNDLILNEIKIEEIRFRETLERGEKLLDELISSGQKLISGFKAFELYDTYGFPLELTVEIAEENSISVDVKGFEEEMNAQKERAKAASSNIDLTLEGSLEREIDLFNKTVFNGYDLLLSEAEIKGIFLDSTLVKQASEGQKVLIVLDQTTFYGESGGQVGDIGTIFSKDLEVLVDNVMRKKNVFLHYGTIKKGILTIGQKVKTNVSSSNRAKAAANHTATHLLQSALKSVVNESVGQKGSLVAFNKLRFDFNSSNPISKDQISKIETLVNSWIMENHALEIKNMSKSEALEKGAVAMFGEKYDDEVRVVNVPGVSMELCGGTHVKTTSELGSFKIISEEGISAGVRRIEALSGQSALDYFSDRNALVNQLSDLLKANPNQLFERVNNLQAELINKNKEIQKMKDEIAYFKYSSIKSSAEIVNSFSILVNQIDGLDGNSLQSAALNLTSHLGNKAIVILGGIPNPENRKLLFVVSLGDDPVKIGLHAGKIINEIARICSGGGGGKPNFAQAGAKDIDKLSDALDYAKNYLQKTLDSHSDK</sequence>
<proteinExistence type="inferred from homology"/>
<keyword id="KW-0030">Aminoacyl-tRNA synthetase</keyword>
<keyword id="KW-0067">ATP-binding</keyword>
<keyword id="KW-0963">Cytoplasm</keyword>
<keyword id="KW-0436">Ligase</keyword>
<keyword id="KW-0479">Metal-binding</keyword>
<keyword id="KW-0547">Nucleotide-binding</keyword>
<keyword id="KW-0648">Protein biosynthesis</keyword>
<keyword id="KW-0694">RNA-binding</keyword>
<keyword id="KW-0820">tRNA-binding</keyword>
<keyword id="KW-0862">Zinc</keyword>
<feature type="chain" id="PRO_0000347728" description="Alanine--tRNA ligase">
    <location>
        <begin position="1"/>
        <end position="886"/>
    </location>
</feature>
<feature type="binding site" evidence="1">
    <location>
        <position position="564"/>
    </location>
    <ligand>
        <name>Zn(2+)</name>
        <dbReference type="ChEBI" id="CHEBI:29105"/>
    </ligand>
</feature>
<feature type="binding site" evidence="1">
    <location>
        <position position="568"/>
    </location>
    <ligand>
        <name>Zn(2+)</name>
        <dbReference type="ChEBI" id="CHEBI:29105"/>
    </ligand>
</feature>
<feature type="binding site" evidence="1">
    <location>
        <position position="666"/>
    </location>
    <ligand>
        <name>Zn(2+)</name>
        <dbReference type="ChEBI" id="CHEBI:29105"/>
    </ligand>
</feature>
<feature type="binding site" evidence="1">
    <location>
        <position position="670"/>
    </location>
    <ligand>
        <name>Zn(2+)</name>
        <dbReference type="ChEBI" id="CHEBI:29105"/>
    </ligand>
</feature>
<reference key="1">
    <citation type="journal article" date="2006" name="Science">
        <title>Genomic islands and the ecology and evolution of Prochlorococcus.</title>
        <authorList>
            <person name="Coleman M.L."/>
            <person name="Sullivan M.B."/>
            <person name="Martiny A.C."/>
            <person name="Steglich C."/>
            <person name="Barry K."/>
            <person name="Delong E.F."/>
            <person name="Chisholm S.W."/>
        </authorList>
    </citation>
    <scope>NUCLEOTIDE SEQUENCE [LARGE SCALE GENOMIC DNA]</scope>
    <source>
        <strain>MIT 9312</strain>
    </source>
</reference>
<gene>
    <name evidence="1" type="primary">alaS</name>
    <name type="ordered locus">PMT9312_0045</name>
</gene>
<organism>
    <name type="scientific">Prochlorococcus marinus (strain MIT 9312)</name>
    <dbReference type="NCBI Taxonomy" id="74546"/>
    <lineage>
        <taxon>Bacteria</taxon>
        <taxon>Bacillati</taxon>
        <taxon>Cyanobacteriota</taxon>
        <taxon>Cyanophyceae</taxon>
        <taxon>Synechococcales</taxon>
        <taxon>Prochlorococcaceae</taxon>
        <taxon>Prochlorococcus</taxon>
    </lineage>
</organism>
<dbReference type="EC" id="6.1.1.7" evidence="1"/>
<dbReference type="EMBL" id="CP000111">
    <property type="protein sequence ID" value="ABB49106.1"/>
    <property type="molecule type" value="Genomic_DNA"/>
</dbReference>
<dbReference type="RefSeq" id="WP_011375610.1">
    <property type="nucleotide sequence ID" value="NC_007577.1"/>
</dbReference>
<dbReference type="SMR" id="Q31DD9"/>
<dbReference type="STRING" id="74546.PMT9312_0045"/>
<dbReference type="KEGG" id="pmi:PMT9312_0045"/>
<dbReference type="eggNOG" id="COG0013">
    <property type="taxonomic scope" value="Bacteria"/>
</dbReference>
<dbReference type="HOGENOM" id="CLU_004485_1_1_3"/>
<dbReference type="OrthoDB" id="9803884at2"/>
<dbReference type="Proteomes" id="UP000002715">
    <property type="component" value="Chromosome"/>
</dbReference>
<dbReference type="GO" id="GO:0005829">
    <property type="term" value="C:cytosol"/>
    <property type="evidence" value="ECO:0007669"/>
    <property type="project" value="TreeGrafter"/>
</dbReference>
<dbReference type="GO" id="GO:0004813">
    <property type="term" value="F:alanine-tRNA ligase activity"/>
    <property type="evidence" value="ECO:0007669"/>
    <property type="project" value="UniProtKB-UniRule"/>
</dbReference>
<dbReference type="GO" id="GO:0002161">
    <property type="term" value="F:aminoacyl-tRNA deacylase activity"/>
    <property type="evidence" value="ECO:0007669"/>
    <property type="project" value="TreeGrafter"/>
</dbReference>
<dbReference type="GO" id="GO:0005524">
    <property type="term" value="F:ATP binding"/>
    <property type="evidence" value="ECO:0007669"/>
    <property type="project" value="UniProtKB-UniRule"/>
</dbReference>
<dbReference type="GO" id="GO:0000049">
    <property type="term" value="F:tRNA binding"/>
    <property type="evidence" value="ECO:0007669"/>
    <property type="project" value="UniProtKB-KW"/>
</dbReference>
<dbReference type="GO" id="GO:0008270">
    <property type="term" value="F:zinc ion binding"/>
    <property type="evidence" value="ECO:0007669"/>
    <property type="project" value="UniProtKB-UniRule"/>
</dbReference>
<dbReference type="GO" id="GO:0006419">
    <property type="term" value="P:alanyl-tRNA aminoacylation"/>
    <property type="evidence" value="ECO:0007669"/>
    <property type="project" value="UniProtKB-UniRule"/>
</dbReference>
<dbReference type="CDD" id="cd00673">
    <property type="entry name" value="AlaRS_core"/>
    <property type="match status" value="1"/>
</dbReference>
<dbReference type="FunFam" id="3.10.310.40:FF:000001">
    <property type="entry name" value="Alanine--tRNA ligase"/>
    <property type="match status" value="1"/>
</dbReference>
<dbReference type="FunFam" id="3.30.54.20:FF:000001">
    <property type="entry name" value="Alanine--tRNA ligase"/>
    <property type="match status" value="1"/>
</dbReference>
<dbReference type="FunFam" id="3.30.930.10:FF:000004">
    <property type="entry name" value="Alanine--tRNA ligase"/>
    <property type="match status" value="1"/>
</dbReference>
<dbReference type="FunFam" id="3.30.980.10:FF:000004">
    <property type="entry name" value="Alanine--tRNA ligase, cytoplasmic"/>
    <property type="match status" value="1"/>
</dbReference>
<dbReference type="Gene3D" id="2.40.30.130">
    <property type="match status" value="1"/>
</dbReference>
<dbReference type="Gene3D" id="3.10.310.40">
    <property type="match status" value="1"/>
</dbReference>
<dbReference type="Gene3D" id="3.30.54.20">
    <property type="match status" value="1"/>
</dbReference>
<dbReference type="Gene3D" id="6.10.250.550">
    <property type="match status" value="1"/>
</dbReference>
<dbReference type="Gene3D" id="3.30.930.10">
    <property type="entry name" value="Bira Bifunctional Protein, Domain 2"/>
    <property type="match status" value="1"/>
</dbReference>
<dbReference type="Gene3D" id="3.30.980.10">
    <property type="entry name" value="Threonyl-trna Synthetase, Chain A, domain 2"/>
    <property type="match status" value="1"/>
</dbReference>
<dbReference type="HAMAP" id="MF_00036_B">
    <property type="entry name" value="Ala_tRNA_synth_B"/>
    <property type="match status" value="1"/>
</dbReference>
<dbReference type="InterPro" id="IPR045864">
    <property type="entry name" value="aa-tRNA-synth_II/BPL/LPL"/>
</dbReference>
<dbReference type="InterPro" id="IPR002318">
    <property type="entry name" value="Ala-tRNA-lgiase_IIc"/>
</dbReference>
<dbReference type="InterPro" id="IPR018162">
    <property type="entry name" value="Ala-tRNA-ligase_IIc_anticod-bd"/>
</dbReference>
<dbReference type="InterPro" id="IPR018165">
    <property type="entry name" value="Ala-tRNA-synth_IIc_core"/>
</dbReference>
<dbReference type="InterPro" id="IPR018164">
    <property type="entry name" value="Ala-tRNA-synth_IIc_N"/>
</dbReference>
<dbReference type="InterPro" id="IPR050058">
    <property type="entry name" value="Ala-tRNA_ligase"/>
</dbReference>
<dbReference type="InterPro" id="IPR023033">
    <property type="entry name" value="Ala_tRNA_ligase_euk/bac"/>
</dbReference>
<dbReference type="InterPro" id="IPR003156">
    <property type="entry name" value="DHHA1_dom"/>
</dbReference>
<dbReference type="InterPro" id="IPR018163">
    <property type="entry name" value="Thr/Ala-tRNA-synth_IIc_edit"/>
</dbReference>
<dbReference type="InterPro" id="IPR009000">
    <property type="entry name" value="Transl_B-barrel_sf"/>
</dbReference>
<dbReference type="InterPro" id="IPR012947">
    <property type="entry name" value="tRNA_SAD"/>
</dbReference>
<dbReference type="NCBIfam" id="TIGR00344">
    <property type="entry name" value="alaS"/>
    <property type="match status" value="1"/>
</dbReference>
<dbReference type="PANTHER" id="PTHR11777:SF9">
    <property type="entry name" value="ALANINE--TRNA LIGASE, CYTOPLASMIC"/>
    <property type="match status" value="1"/>
</dbReference>
<dbReference type="PANTHER" id="PTHR11777">
    <property type="entry name" value="ALANYL-TRNA SYNTHETASE"/>
    <property type="match status" value="1"/>
</dbReference>
<dbReference type="Pfam" id="PF02272">
    <property type="entry name" value="DHHA1"/>
    <property type="match status" value="1"/>
</dbReference>
<dbReference type="Pfam" id="PF01411">
    <property type="entry name" value="tRNA-synt_2c"/>
    <property type="match status" value="1"/>
</dbReference>
<dbReference type="Pfam" id="PF07973">
    <property type="entry name" value="tRNA_SAD"/>
    <property type="match status" value="1"/>
</dbReference>
<dbReference type="PRINTS" id="PR00980">
    <property type="entry name" value="TRNASYNTHALA"/>
</dbReference>
<dbReference type="SMART" id="SM00863">
    <property type="entry name" value="tRNA_SAD"/>
    <property type="match status" value="1"/>
</dbReference>
<dbReference type="SUPFAM" id="SSF55681">
    <property type="entry name" value="Class II aaRS and biotin synthetases"/>
    <property type="match status" value="1"/>
</dbReference>
<dbReference type="SUPFAM" id="SSF101353">
    <property type="entry name" value="Putative anticodon-binding domain of alanyl-tRNA synthetase (AlaRS)"/>
    <property type="match status" value="1"/>
</dbReference>
<dbReference type="SUPFAM" id="SSF55186">
    <property type="entry name" value="ThrRS/AlaRS common domain"/>
    <property type="match status" value="1"/>
</dbReference>
<dbReference type="SUPFAM" id="SSF50447">
    <property type="entry name" value="Translation proteins"/>
    <property type="match status" value="1"/>
</dbReference>
<dbReference type="PROSITE" id="PS50860">
    <property type="entry name" value="AA_TRNA_LIGASE_II_ALA"/>
    <property type="match status" value="1"/>
</dbReference>
<comment type="function">
    <text evidence="1">Catalyzes the attachment of alanine to tRNA(Ala) in a two-step reaction: alanine is first activated by ATP to form Ala-AMP and then transferred to the acceptor end of tRNA(Ala). Also edits incorrectly charged Ser-tRNA(Ala) and Gly-tRNA(Ala) via its editing domain.</text>
</comment>
<comment type="catalytic activity">
    <reaction evidence="1">
        <text>tRNA(Ala) + L-alanine + ATP = L-alanyl-tRNA(Ala) + AMP + diphosphate</text>
        <dbReference type="Rhea" id="RHEA:12540"/>
        <dbReference type="Rhea" id="RHEA-COMP:9657"/>
        <dbReference type="Rhea" id="RHEA-COMP:9923"/>
        <dbReference type="ChEBI" id="CHEBI:30616"/>
        <dbReference type="ChEBI" id="CHEBI:33019"/>
        <dbReference type="ChEBI" id="CHEBI:57972"/>
        <dbReference type="ChEBI" id="CHEBI:78442"/>
        <dbReference type="ChEBI" id="CHEBI:78497"/>
        <dbReference type="ChEBI" id="CHEBI:456215"/>
        <dbReference type="EC" id="6.1.1.7"/>
    </reaction>
</comment>
<comment type="cofactor">
    <cofactor evidence="1">
        <name>Zn(2+)</name>
        <dbReference type="ChEBI" id="CHEBI:29105"/>
    </cofactor>
    <text evidence="1">Binds 1 zinc ion per subunit.</text>
</comment>
<comment type="subcellular location">
    <subcellularLocation>
        <location evidence="1">Cytoplasm</location>
    </subcellularLocation>
</comment>
<comment type="domain">
    <text evidence="1">Consists of three domains; the N-terminal catalytic domain, the editing domain and the C-terminal C-Ala domain. The editing domain removes incorrectly charged amino acids, while the C-Ala domain, along with tRNA(Ala), serves as a bridge to cooperatively bring together the editing and aminoacylation centers thus stimulating deacylation of misacylated tRNAs.</text>
</comment>
<comment type="similarity">
    <text evidence="1">Belongs to the class-II aminoacyl-tRNA synthetase family.</text>
</comment>
<evidence type="ECO:0000255" key="1">
    <source>
        <dbReference type="HAMAP-Rule" id="MF_00036"/>
    </source>
</evidence>
<protein>
    <recommendedName>
        <fullName evidence="1">Alanine--tRNA ligase</fullName>
        <ecNumber evidence="1">6.1.1.7</ecNumber>
    </recommendedName>
    <alternativeName>
        <fullName evidence="1">Alanyl-tRNA synthetase</fullName>
        <shortName evidence="1">AlaRS</shortName>
    </alternativeName>
</protein>
<accession>Q31DD9</accession>